<sequence>MVRILRWFIRLYQIAISPLLGPRCRYIPTCSQYALEALQTHGAIKGVWLSSKRICRCHPWGGSGYDPVPPKAIRFISFHQIDSQTHHVAVPFRDRLMKQNLSNHLG</sequence>
<dbReference type="EMBL" id="CU459141">
    <property type="protein sequence ID" value="CAM88650.1"/>
    <property type="molecule type" value="Genomic_DNA"/>
</dbReference>
<dbReference type="EnsemblBacteria" id="CAM88650">
    <property type="protein sequence ID" value="CAM88650"/>
    <property type="gene ID" value="ABAYE3901"/>
</dbReference>
<dbReference type="KEGG" id="aby:ABAYE3901"/>
<dbReference type="HOGENOM" id="CLU_144811_2_2_6"/>
<dbReference type="GO" id="GO:0005886">
    <property type="term" value="C:plasma membrane"/>
    <property type="evidence" value="ECO:0007669"/>
    <property type="project" value="UniProtKB-SubCell"/>
</dbReference>
<dbReference type="HAMAP" id="MF_00386">
    <property type="entry name" value="UPF0161_YidD"/>
    <property type="match status" value="1"/>
</dbReference>
<dbReference type="InterPro" id="IPR002696">
    <property type="entry name" value="Membr_insert_effic_factor_YidD"/>
</dbReference>
<dbReference type="NCBIfam" id="TIGR00278">
    <property type="entry name" value="membrane protein insertion efficiency factor YidD"/>
    <property type="match status" value="1"/>
</dbReference>
<dbReference type="PANTHER" id="PTHR33383">
    <property type="entry name" value="MEMBRANE PROTEIN INSERTION EFFICIENCY FACTOR-RELATED"/>
    <property type="match status" value="1"/>
</dbReference>
<dbReference type="PANTHER" id="PTHR33383:SF1">
    <property type="entry name" value="MEMBRANE PROTEIN INSERTION EFFICIENCY FACTOR-RELATED"/>
    <property type="match status" value="1"/>
</dbReference>
<dbReference type="Pfam" id="PF01809">
    <property type="entry name" value="YidD"/>
    <property type="match status" value="1"/>
</dbReference>
<dbReference type="SMART" id="SM01234">
    <property type="entry name" value="Haemolytic"/>
    <property type="match status" value="1"/>
</dbReference>
<evidence type="ECO:0000255" key="1">
    <source>
        <dbReference type="HAMAP-Rule" id="MF_00386"/>
    </source>
</evidence>
<organism>
    <name type="scientific">Acinetobacter baumannii (strain AYE)</name>
    <dbReference type="NCBI Taxonomy" id="509173"/>
    <lineage>
        <taxon>Bacteria</taxon>
        <taxon>Pseudomonadati</taxon>
        <taxon>Pseudomonadota</taxon>
        <taxon>Gammaproteobacteria</taxon>
        <taxon>Moraxellales</taxon>
        <taxon>Moraxellaceae</taxon>
        <taxon>Acinetobacter</taxon>
        <taxon>Acinetobacter calcoaceticus/baumannii complex</taxon>
    </lineage>
</organism>
<name>YIDD_ACIBY</name>
<feature type="chain" id="PRO_1000122610" description="Putative membrane protein insertion efficiency factor">
    <location>
        <begin position="1"/>
        <end position="106"/>
    </location>
</feature>
<keyword id="KW-0997">Cell inner membrane</keyword>
<keyword id="KW-1003">Cell membrane</keyword>
<keyword id="KW-0472">Membrane</keyword>
<proteinExistence type="inferred from homology"/>
<reference key="1">
    <citation type="journal article" date="2008" name="PLoS ONE">
        <title>Comparative analysis of Acinetobacters: three genomes for three lifestyles.</title>
        <authorList>
            <person name="Vallenet D."/>
            <person name="Nordmann P."/>
            <person name="Barbe V."/>
            <person name="Poirel L."/>
            <person name="Mangenot S."/>
            <person name="Bataille E."/>
            <person name="Dossat C."/>
            <person name="Gas S."/>
            <person name="Kreimeyer A."/>
            <person name="Lenoble P."/>
            <person name="Oztas S."/>
            <person name="Poulain J."/>
            <person name="Segurens B."/>
            <person name="Robert C."/>
            <person name="Abergel C."/>
            <person name="Claverie J.-M."/>
            <person name="Raoult D."/>
            <person name="Medigue C."/>
            <person name="Weissenbach J."/>
            <person name="Cruveiller S."/>
        </authorList>
    </citation>
    <scope>NUCLEOTIDE SEQUENCE [LARGE SCALE GENOMIC DNA]</scope>
    <source>
        <strain>AYE</strain>
    </source>
</reference>
<gene>
    <name type="ordered locus">ABAYE3901</name>
</gene>
<accession>B0V5R1</accession>
<comment type="function">
    <text evidence="1">Could be involved in insertion of integral membrane proteins into the membrane.</text>
</comment>
<comment type="subcellular location">
    <subcellularLocation>
        <location evidence="1">Cell inner membrane</location>
        <topology evidence="1">Peripheral membrane protein</topology>
        <orientation evidence="1">Cytoplasmic side</orientation>
    </subcellularLocation>
</comment>
<comment type="similarity">
    <text evidence="1">Belongs to the UPF0161 family.</text>
</comment>
<protein>
    <recommendedName>
        <fullName evidence="1">Putative membrane protein insertion efficiency factor</fullName>
    </recommendedName>
</protein>